<proteinExistence type="inferred from homology"/>
<evidence type="ECO:0000255" key="1">
    <source>
        <dbReference type="HAMAP-Rule" id="MF_00500"/>
    </source>
</evidence>
<evidence type="ECO:0000305" key="2"/>
<accession>A4J7G2</accession>
<name>RS20_DESRM</name>
<organism>
    <name type="scientific">Desulforamulus reducens (strain ATCC BAA-1160 / DSM 100696 / MI-1)</name>
    <name type="common">Desulfotomaculum reducens</name>
    <dbReference type="NCBI Taxonomy" id="349161"/>
    <lineage>
        <taxon>Bacteria</taxon>
        <taxon>Bacillati</taxon>
        <taxon>Bacillota</taxon>
        <taxon>Clostridia</taxon>
        <taxon>Eubacteriales</taxon>
        <taxon>Peptococcaceae</taxon>
        <taxon>Desulforamulus</taxon>
    </lineage>
</organism>
<keyword id="KW-1185">Reference proteome</keyword>
<keyword id="KW-0687">Ribonucleoprotein</keyword>
<keyword id="KW-0689">Ribosomal protein</keyword>
<keyword id="KW-0694">RNA-binding</keyword>
<keyword id="KW-0699">rRNA-binding</keyword>
<feature type="chain" id="PRO_1000072436" description="Small ribosomal subunit protein bS20">
    <location>
        <begin position="1"/>
        <end position="88"/>
    </location>
</feature>
<gene>
    <name evidence="1" type="primary">rpsT</name>
    <name type="ordered locus">Dred_2505</name>
</gene>
<reference key="1">
    <citation type="submission" date="2007-03" db="EMBL/GenBank/DDBJ databases">
        <title>Complete sequence of Desulfotomaculum reducens MI-1.</title>
        <authorList>
            <consortium name="US DOE Joint Genome Institute"/>
            <person name="Copeland A."/>
            <person name="Lucas S."/>
            <person name="Lapidus A."/>
            <person name="Barry K."/>
            <person name="Detter J.C."/>
            <person name="Glavina del Rio T."/>
            <person name="Hammon N."/>
            <person name="Israni S."/>
            <person name="Dalin E."/>
            <person name="Tice H."/>
            <person name="Pitluck S."/>
            <person name="Sims D."/>
            <person name="Brettin T."/>
            <person name="Bruce D."/>
            <person name="Han C."/>
            <person name="Tapia R."/>
            <person name="Schmutz J."/>
            <person name="Larimer F."/>
            <person name="Land M."/>
            <person name="Hauser L."/>
            <person name="Kyrpides N."/>
            <person name="Kim E."/>
            <person name="Tebo B.M."/>
            <person name="Richardson P."/>
        </authorList>
    </citation>
    <scope>NUCLEOTIDE SEQUENCE [LARGE SCALE GENOMIC DNA]</scope>
    <source>
        <strain>ATCC BAA-1160 / DSM 100696 / MI-1</strain>
    </source>
</reference>
<sequence length="88" mass="9687">MPNIKSAIKRVEITKARTIRNASIKSAVKTAIRRYEEALAKADKEVAETALRNAMVAVDKAVTKGVLHKNAAARKKSRLTKRFNKIAG</sequence>
<comment type="function">
    <text evidence="1">Binds directly to 16S ribosomal RNA.</text>
</comment>
<comment type="similarity">
    <text evidence="1">Belongs to the bacterial ribosomal protein bS20 family.</text>
</comment>
<protein>
    <recommendedName>
        <fullName evidence="1">Small ribosomal subunit protein bS20</fullName>
    </recommendedName>
    <alternativeName>
        <fullName evidence="2">30S ribosomal protein S20</fullName>
    </alternativeName>
</protein>
<dbReference type="EMBL" id="CP000612">
    <property type="protein sequence ID" value="ABO51015.1"/>
    <property type="molecule type" value="Genomic_DNA"/>
</dbReference>
<dbReference type="RefSeq" id="WP_011878813.1">
    <property type="nucleotide sequence ID" value="NC_009253.1"/>
</dbReference>
<dbReference type="SMR" id="A4J7G2"/>
<dbReference type="STRING" id="349161.Dred_2505"/>
<dbReference type="KEGG" id="drm:Dred_2505"/>
<dbReference type="eggNOG" id="COG0268">
    <property type="taxonomic scope" value="Bacteria"/>
</dbReference>
<dbReference type="HOGENOM" id="CLU_160655_1_0_9"/>
<dbReference type="OrthoDB" id="9808392at2"/>
<dbReference type="Proteomes" id="UP000001556">
    <property type="component" value="Chromosome"/>
</dbReference>
<dbReference type="GO" id="GO:0005829">
    <property type="term" value="C:cytosol"/>
    <property type="evidence" value="ECO:0007669"/>
    <property type="project" value="TreeGrafter"/>
</dbReference>
<dbReference type="GO" id="GO:0015935">
    <property type="term" value="C:small ribosomal subunit"/>
    <property type="evidence" value="ECO:0007669"/>
    <property type="project" value="TreeGrafter"/>
</dbReference>
<dbReference type="GO" id="GO:0070181">
    <property type="term" value="F:small ribosomal subunit rRNA binding"/>
    <property type="evidence" value="ECO:0007669"/>
    <property type="project" value="TreeGrafter"/>
</dbReference>
<dbReference type="GO" id="GO:0003735">
    <property type="term" value="F:structural constituent of ribosome"/>
    <property type="evidence" value="ECO:0007669"/>
    <property type="project" value="InterPro"/>
</dbReference>
<dbReference type="GO" id="GO:0006412">
    <property type="term" value="P:translation"/>
    <property type="evidence" value="ECO:0007669"/>
    <property type="project" value="UniProtKB-UniRule"/>
</dbReference>
<dbReference type="FunFam" id="1.20.58.110:FF:000001">
    <property type="entry name" value="30S ribosomal protein S20"/>
    <property type="match status" value="1"/>
</dbReference>
<dbReference type="Gene3D" id="1.20.58.110">
    <property type="entry name" value="Ribosomal protein S20"/>
    <property type="match status" value="1"/>
</dbReference>
<dbReference type="HAMAP" id="MF_00500">
    <property type="entry name" value="Ribosomal_bS20"/>
    <property type="match status" value="1"/>
</dbReference>
<dbReference type="InterPro" id="IPR002583">
    <property type="entry name" value="Ribosomal_bS20"/>
</dbReference>
<dbReference type="InterPro" id="IPR036510">
    <property type="entry name" value="Ribosomal_bS20_sf"/>
</dbReference>
<dbReference type="NCBIfam" id="TIGR00029">
    <property type="entry name" value="S20"/>
    <property type="match status" value="1"/>
</dbReference>
<dbReference type="PANTHER" id="PTHR33398">
    <property type="entry name" value="30S RIBOSOMAL PROTEIN S20"/>
    <property type="match status" value="1"/>
</dbReference>
<dbReference type="PANTHER" id="PTHR33398:SF1">
    <property type="entry name" value="SMALL RIBOSOMAL SUBUNIT PROTEIN BS20C"/>
    <property type="match status" value="1"/>
</dbReference>
<dbReference type="Pfam" id="PF01649">
    <property type="entry name" value="Ribosomal_S20p"/>
    <property type="match status" value="1"/>
</dbReference>
<dbReference type="SUPFAM" id="SSF46992">
    <property type="entry name" value="Ribosomal protein S20"/>
    <property type="match status" value="1"/>
</dbReference>